<name>KBX3_PANIM</name>
<comment type="function">
    <text evidence="2 3">This full-length protein shows antibacterial activity against B.subtilis and K.pneumoniae (PubMed:10767415). Also shows a potent inhibitory effect on the ookinete (ED(50) 0.7 uM) and gamete (ED(50) 10 uM) stages of Plasmodium berghei development (PubMed:10767415). In addition, induces cell membrane disruption, leakage currents and cell death on HEK293 cell line (tested at 25 uM) (PubMed:36436588).</text>
</comment>
<comment type="subcellular location">
    <subcellularLocation>
        <location evidence="2">Secreted</location>
    </subcellularLocation>
    <subcellularLocation>
        <location evidence="8">Target cell membrane</location>
    </subcellularLocation>
    <text evidence="8">forms an alpha-helix in presence of membranes.</text>
</comment>
<comment type="tissue specificity">
    <text evidence="7">Expressed by the venom gland.</text>
</comment>
<comment type="domain">
    <text evidence="3">The recombinantly expressed N-terminal domain (AA 20-47) induces cell membrane disruption, leakage currents and cell death on HEK293 cell line (tested at 25 uM). Does not inhibit potassium channels Shaker and Kv7.1/KCNQ1 (tested at 18 uM).</text>
</comment>
<comment type="domain">
    <text evidence="3">The recombinantly expressed C-terminal domain (AA 48-94) induces cell membrane disruption, leakage currents and cell death on HEK293 cell line (tested at 25 uM). Moderately inhibits both potassium channels Shaker and Kv7.1/KCNQ1 (36% and 20%, respectively, when tested at 18 uM).</text>
</comment>
<comment type="mass spectrometry"/>
<comment type="miscellaneous">
    <text evidence="3">Negative results: does not inhibit potassium channels Shaker and Kv7.1/KCNQ1, when tested at lower doses than those inducing cytolytic activity (18 uM).</text>
</comment>
<comment type="similarity">
    <text evidence="6">Belongs to the long chain scorpion toxin family. Class 3 subfamily.</text>
</comment>
<keyword id="KW-0002">3D-structure</keyword>
<keyword id="KW-0044">Antibiotic</keyword>
<keyword id="KW-0929">Antimicrobial</keyword>
<keyword id="KW-0903">Direct protein sequencing</keyword>
<keyword id="KW-1015">Disulfide bond</keyword>
<keyword id="KW-0472">Membrane</keyword>
<keyword id="KW-0964">Secreted</keyword>
<keyword id="KW-0732">Signal</keyword>
<keyword id="KW-1052">Target cell membrane</keyword>
<keyword id="KW-1053">Target membrane</keyword>
<keyword id="KW-0800">Toxin</keyword>
<proteinExistence type="evidence at protein level"/>
<reference key="1">
    <citation type="journal article" date="2000" name="FEBS Lett.">
        <title>Scorpine, an anti-malaria and anti-bacterial agent purified from scorpion venom.</title>
        <authorList>
            <person name="Conde R."/>
            <person name="Zamudio F.Z."/>
            <person name="Rodriguez M.H."/>
            <person name="Possani L.D."/>
        </authorList>
    </citation>
    <scope>NUCLEOTIDE SEQUENCE [MRNA]</scope>
    <scope>PROTEIN SEQUENCE OF 20-94</scope>
    <scope>FUNCTION</scope>
    <scope>MASS SPECTROMETRY</scope>
    <scope>SUBCELLULAR LOCATION</scope>
    <source>
        <tissue>Venom</tissue>
        <tissue>Venom gland</tissue>
    </source>
</reference>
<reference evidence="9 10" key="2">
    <citation type="journal article" date="2023" name="Toxicon">
        <title>Structural and functional studies of scorpine: A channel blocker and cytolytic peptide.</title>
        <authorList>
            <person name="Lopez-Giraldo E."/>
            <person name="Carrillo E."/>
            <person name="Titaux-Delgado G."/>
            <person name="Cano-Sanchez P."/>
            <person name="Colorado A."/>
            <person name="Possani L.D."/>
            <person name="Rio-Portilla F.D."/>
        </authorList>
    </citation>
    <scope>STRUCTURE BY NMR OF 20-47 AND 48-94</scope>
    <scope>FUNCTION</scope>
    <scope>RECOMBINANT EXPRESSION OF 20-47 AND 48-94</scope>
    <scope>DISULFIDE BONDS</scope>
</reference>
<organism>
    <name type="scientific">Pandinus imperator</name>
    <name type="common">Emperor scorpion</name>
    <dbReference type="NCBI Taxonomy" id="55084"/>
    <lineage>
        <taxon>Eukaryota</taxon>
        <taxon>Metazoa</taxon>
        <taxon>Ecdysozoa</taxon>
        <taxon>Arthropoda</taxon>
        <taxon>Chelicerata</taxon>
        <taxon>Arachnida</taxon>
        <taxon>Scorpiones</taxon>
        <taxon>Iurida</taxon>
        <taxon>Scorpionoidea</taxon>
        <taxon>Scorpionidae</taxon>
        <taxon>Pandininae</taxon>
        <taxon>Pandinus</taxon>
    </lineage>
</organism>
<dbReference type="EMBL" id="AJ292361">
    <property type="protein sequence ID" value="CAB96789.1"/>
    <property type="molecule type" value="mRNA"/>
</dbReference>
<dbReference type="PDB" id="7M1D">
    <property type="method" value="NMR"/>
    <property type="chains" value="A=48-94"/>
</dbReference>
<dbReference type="PDB" id="7M1E">
    <property type="method" value="NMR"/>
    <property type="chains" value="A=20-47"/>
</dbReference>
<dbReference type="PDBsum" id="7M1D"/>
<dbReference type="PDBsum" id="7M1E"/>
<dbReference type="SMR" id="P56972"/>
<dbReference type="TCDB" id="1.C.47.3.1">
    <property type="family name" value="the insect/fungal defensin (insect/fungal defensin) family"/>
</dbReference>
<dbReference type="GO" id="GO:0005576">
    <property type="term" value="C:extracellular region"/>
    <property type="evidence" value="ECO:0007669"/>
    <property type="project" value="UniProtKB-SubCell"/>
</dbReference>
<dbReference type="GO" id="GO:0016020">
    <property type="term" value="C:membrane"/>
    <property type="evidence" value="ECO:0007669"/>
    <property type="project" value="UniProtKB-KW"/>
</dbReference>
<dbReference type="GO" id="GO:0044218">
    <property type="term" value="C:other organism cell membrane"/>
    <property type="evidence" value="ECO:0007669"/>
    <property type="project" value="UniProtKB-KW"/>
</dbReference>
<dbReference type="GO" id="GO:0090729">
    <property type="term" value="F:toxin activity"/>
    <property type="evidence" value="ECO:0007669"/>
    <property type="project" value="UniProtKB-KW"/>
</dbReference>
<dbReference type="GO" id="GO:0042742">
    <property type="term" value="P:defense response to bacterium"/>
    <property type="evidence" value="ECO:0007669"/>
    <property type="project" value="UniProtKB-KW"/>
</dbReference>
<dbReference type="InterPro" id="IPR029237">
    <property type="entry name" value="Long_scorpion_toxin_alpha/beta"/>
</dbReference>
<dbReference type="Pfam" id="PF14866">
    <property type="entry name" value="Scorpion_toxin_alpha-beta"/>
    <property type="match status" value="1"/>
</dbReference>
<dbReference type="PROSITE" id="PS51862">
    <property type="entry name" value="BSPN_CSAB"/>
    <property type="match status" value="1"/>
</dbReference>
<accession>P56972</accession>
<sequence>MNSKLTALIFLGLIAIAYCGWINEEKIQKKIDERMGNTVLGGMAKAIVHKMAKNEFQCMANMDMLGNCEKHCQTSGEKGYCHGTKCKCGTPLSY</sequence>
<evidence type="ECO:0000255" key="1">
    <source>
        <dbReference type="PROSITE-ProRule" id="PRU01209"/>
    </source>
</evidence>
<evidence type="ECO:0000269" key="2">
    <source>
    </source>
</evidence>
<evidence type="ECO:0000269" key="3">
    <source>
    </source>
</evidence>
<evidence type="ECO:0000303" key="4">
    <source>
    </source>
</evidence>
<evidence type="ECO:0000303" key="5">
    <source>
    </source>
</evidence>
<evidence type="ECO:0000305" key="6"/>
<evidence type="ECO:0000305" key="7">
    <source>
    </source>
</evidence>
<evidence type="ECO:0000305" key="8">
    <source>
    </source>
</evidence>
<evidence type="ECO:0000312" key="9">
    <source>
        <dbReference type="PDB" id="7M1D"/>
    </source>
</evidence>
<evidence type="ECO:0000312" key="10">
    <source>
        <dbReference type="PDB" id="7M1E"/>
    </source>
</evidence>
<evidence type="ECO:0007744" key="11">
    <source>
        <dbReference type="PDB" id="7M1D"/>
    </source>
</evidence>
<evidence type="ECO:0007829" key="12">
    <source>
        <dbReference type="PDB" id="7M1D"/>
    </source>
</evidence>
<evidence type="ECO:0007829" key="13">
    <source>
        <dbReference type="PDB" id="7M1E"/>
    </source>
</evidence>
<protein>
    <recommendedName>
        <fullName evidence="4 5">Scorpine</fullName>
        <shortName>Scorpin</shortName>
    </recommendedName>
    <alternativeName>
        <fullName>Panscorpine</fullName>
    </alternativeName>
</protein>
<feature type="signal peptide" evidence="2">
    <location>
        <begin position="1"/>
        <end position="19"/>
    </location>
</feature>
<feature type="chain" id="PRO_0000035355" description="Scorpine" evidence="2">
    <location>
        <begin position="20"/>
        <end position="94"/>
    </location>
</feature>
<feature type="domain" description="BetaSPN-type CS-alpha/beta" evidence="1">
    <location>
        <begin position="55"/>
        <end position="94"/>
    </location>
</feature>
<feature type="disulfide bond" evidence="8 11">
    <location>
        <begin position="58"/>
        <end position="81"/>
    </location>
</feature>
<feature type="disulfide bond" evidence="8 11">
    <location>
        <begin position="68"/>
        <end position="86"/>
    </location>
</feature>
<feature type="disulfide bond" evidence="8 11">
    <location>
        <begin position="72"/>
        <end position="88"/>
    </location>
</feature>
<feature type="helix" evidence="13">
    <location>
        <begin position="22"/>
        <end position="34"/>
    </location>
</feature>
<feature type="turn" evidence="13">
    <location>
        <begin position="35"/>
        <end position="39"/>
    </location>
</feature>
<feature type="helix" evidence="13">
    <location>
        <begin position="40"/>
        <end position="44"/>
    </location>
</feature>
<feature type="turn" evidence="12">
    <location>
        <begin position="57"/>
        <end position="59"/>
    </location>
</feature>
<feature type="turn" evidence="12">
    <location>
        <begin position="61"/>
        <end position="63"/>
    </location>
</feature>
<feature type="turn" evidence="12">
    <location>
        <begin position="69"/>
        <end position="72"/>
    </location>
</feature>
<feature type="helix" evidence="12">
    <location>
        <begin position="73"/>
        <end position="75"/>
    </location>
</feature>
<feature type="strand" evidence="12">
    <location>
        <begin position="77"/>
        <end position="80"/>
    </location>
</feature>
<feature type="strand" evidence="12">
    <location>
        <begin position="87"/>
        <end position="89"/>
    </location>
</feature>